<organism>
    <name type="scientific">Pasteurella multocida (strain Pm70)</name>
    <dbReference type="NCBI Taxonomy" id="272843"/>
    <lineage>
        <taxon>Bacteria</taxon>
        <taxon>Pseudomonadati</taxon>
        <taxon>Pseudomonadota</taxon>
        <taxon>Gammaproteobacteria</taxon>
        <taxon>Pasteurellales</taxon>
        <taxon>Pasteurellaceae</taxon>
        <taxon>Pasteurella</taxon>
    </lineage>
</organism>
<reference key="1">
    <citation type="journal article" date="2001" name="Proc. Natl. Acad. Sci. U.S.A.">
        <title>Complete genomic sequence of Pasteurella multocida Pm70.</title>
        <authorList>
            <person name="May B.J."/>
            <person name="Zhang Q."/>
            <person name="Li L.L."/>
            <person name="Paustian M.L."/>
            <person name="Whittam T.S."/>
            <person name="Kapur V."/>
        </authorList>
    </citation>
    <scope>NUCLEOTIDE SEQUENCE [LARGE SCALE GENOMIC DNA]</scope>
    <source>
        <strain>Pm70</strain>
    </source>
</reference>
<dbReference type="EC" id="6.3.4.5"/>
<dbReference type="EMBL" id="AE004439">
    <property type="protein sequence ID" value="AAK02897.1"/>
    <property type="molecule type" value="Genomic_DNA"/>
</dbReference>
<dbReference type="RefSeq" id="WP_005722481.1">
    <property type="nucleotide sequence ID" value="NC_002663.1"/>
</dbReference>
<dbReference type="SMR" id="P57877"/>
<dbReference type="STRING" id="272843.PM0813"/>
<dbReference type="EnsemblBacteria" id="AAK02897">
    <property type="protein sequence ID" value="AAK02897"/>
    <property type="gene ID" value="PM0813"/>
</dbReference>
<dbReference type="KEGG" id="pmu:PM0813"/>
<dbReference type="HOGENOM" id="CLU_032784_4_1_6"/>
<dbReference type="OrthoDB" id="9801641at2"/>
<dbReference type="UniPathway" id="UPA00068">
    <property type="reaction ID" value="UER00113"/>
</dbReference>
<dbReference type="Proteomes" id="UP000000809">
    <property type="component" value="Chromosome"/>
</dbReference>
<dbReference type="GO" id="GO:0005737">
    <property type="term" value="C:cytoplasm"/>
    <property type="evidence" value="ECO:0007669"/>
    <property type="project" value="UniProtKB-SubCell"/>
</dbReference>
<dbReference type="GO" id="GO:0004055">
    <property type="term" value="F:argininosuccinate synthase activity"/>
    <property type="evidence" value="ECO:0007669"/>
    <property type="project" value="UniProtKB-UniRule"/>
</dbReference>
<dbReference type="GO" id="GO:0005524">
    <property type="term" value="F:ATP binding"/>
    <property type="evidence" value="ECO:0007669"/>
    <property type="project" value="UniProtKB-UniRule"/>
</dbReference>
<dbReference type="GO" id="GO:0042803">
    <property type="term" value="F:protein homodimerization activity"/>
    <property type="evidence" value="ECO:0007669"/>
    <property type="project" value="InterPro"/>
</dbReference>
<dbReference type="GO" id="GO:0000053">
    <property type="term" value="P:argininosuccinate metabolic process"/>
    <property type="evidence" value="ECO:0007669"/>
    <property type="project" value="TreeGrafter"/>
</dbReference>
<dbReference type="GO" id="GO:0006526">
    <property type="term" value="P:L-arginine biosynthetic process"/>
    <property type="evidence" value="ECO:0007669"/>
    <property type="project" value="UniProtKB-UniRule"/>
</dbReference>
<dbReference type="GO" id="GO:0000050">
    <property type="term" value="P:urea cycle"/>
    <property type="evidence" value="ECO:0007669"/>
    <property type="project" value="TreeGrafter"/>
</dbReference>
<dbReference type="CDD" id="cd01999">
    <property type="entry name" value="ASS"/>
    <property type="match status" value="1"/>
</dbReference>
<dbReference type="FunFam" id="1.10.287.400:FF:000001">
    <property type="entry name" value="Argininosuccinate synthase"/>
    <property type="match status" value="1"/>
</dbReference>
<dbReference type="Gene3D" id="1.10.287.400">
    <property type="match status" value="1"/>
</dbReference>
<dbReference type="Gene3D" id="3.90.1260.10">
    <property type="entry name" value="Argininosuccinate synthetase, chain A, domain 2"/>
    <property type="match status" value="1"/>
</dbReference>
<dbReference type="Gene3D" id="3.40.50.620">
    <property type="entry name" value="HUPs"/>
    <property type="match status" value="1"/>
</dbReference>
<dbReference type="HAMAP" id="MF_00581">
    <property type="entry name" value="Arg_succ_synth_type2"/>
    <property type="match status" value="1"/>
</dbReference>
<dbReference type="InterPro" id="IPR023437">
    <property type="entry name" value="Arg_succ_synth_type2_subfam"/>
</dbReference>
<dbReference type="InterPro" id="IPR048268">
    <property type="entry name" value="Arginosuc_syn_C"/>
</dbReference>
<dbReference type="InterPro" id="IPR048267">
    <property type="entry name" value="Arginosuc_syn_N"/>
</dbReference>
<dbReference type="InterPro" id="IPR001518">
    <property type="entry name" value="Arginosuc_synth"/>
</dbReference>
<dbReference type="InterPro" id="IPR018223">
    <property type="entry name" value="Arginosuc_synth_CS"/>
</dbReference>
<dbReference type="InterPro" id="IPR023434">
    <property type="entry name" value="Arginosuc_synth_type_1_subfam"/>
</dbReference>
<dbReference type="InterPro" id="IPR024074">
    <property type="entry name" value="AS_cat/multimer_dom_body"/>
</dbReference>
<dbReference type="InterPro" id="IPR024073">
    <property type="entry name" value="AS_multimer_C_tail"/>
</dbReference>
<dbReference type="InterPro" id="IPR014729">
    <property type="entry name" value="Rossmann-like_a/b/a_fold"/>
</dbReference>
<dbReference type="NCBIfam" id="TIGR00032">
    <property type="entry name" value="argG"/>
    <property type="match status" value="1"/>
</dbReference>
<dbReference type="NCBIfam" id="NF003779">
    <property type="entry name" value="PRK05370.1"/>
    <property type="match status" value="1"/>
</dbReference>
<dbReference type="PANTHER" id="PTHR11587">
    <property type="entry name" value="ARGININOSUCCINATE SYNTHASE"/>
    <property type="match status" value="1"/>
</dbReference>
<dbReference type="PANTHER" id="PTHR11587:SF2">
    <property type="entry name" value="ARGININOSUCCINATE SYNTHASE"/>
    <property type="match status" value="1"/>
</dbReference>
<dbReference type="Pfam" id="PF20979">
    <property type="entry name" value="Arginosuc_syn_C"/>
    <property type="match status" value="1"/>
</dbReference>
<dbReference type="Pfam" id="PF00764">
    <property type="entry name" value="Arginosuc_synth"/>
    <property type="match status" value="1"/>
</dbReference>
<dbReference type="SUPFAM" id="SSF52402">
    <property type="entry name" value="Adenine nucleotide alpha hydrolases-like"/>
    <property type="match status" value="1"/>
</dbReference>
<dbReference type="SUPFAM" id="SSF69864">
    <property type="entry name" value="Argininosuccinate synthetase, C-terminal domain"/>
    <property type="match status" value="1"/>
</dbReference>
<dbReference type="PROSITE" id="PS00564">
    <property type="entry name" value="ARGININOSUCCIN_SYN_1"/>
    <property type="match status" value="1"/>
</dbReference>
<dbReference type="PROSITE" id="PS00565">
    <property type="entry name" value="ARGININOSUCCIN_SYN_2"/>
    <property type="match status" value="1"/>
</dbReference>
<proteinExistence type="inferred from homology"/>
<feature type="chain" id="PRO_0000148703" description="Argininosuccinate synthase">
    <location>
        <begin position="1"/>
        <end position="445"/>
    </location>
</feature>
<feature type="binding site" evidence="1">
    <location>
        <begin position="18"/>
        <end position="26"/>
    </location>
    <ligand>
        <name>ATP</name>
        <dbReference type="ChEBI" id="CHEBI:30616"/>
    </ligand>
</feature>
<feature type="binding site" evidence="1">
    <location>
        <position position="44"/>
    </location>
    <ligand>
        <name>ATP</name>
        <dbReference type="ChEBI" id="CHEBI:30616"/>
    </ligand>
</feature>
<feature type="binding site" evidence="1">
    <location>
        <position position="100"/>
    </location>
    <ligand>
        <name>L-citrulline</name>
        <dbReference type="ChEBI" id="CHEBI:57743"/>
    </ligand>
</feature>
<feature type="binding site" evidence="1">
    <location>
        <position position="130"/>
    </location>
    <ligand>
        <name>ATP</name>
        <dbReference type="ChEBI" id="CHEBI:30616"/>
    </ligand>
</feature>
<feature type="binding site" evidence="1">
    <location>
        <position position="132"/>
    </location>
    <ligand>
        <name>ATP</name>
        <dbReference type="ChEBI" id="CHEBI:30616"/>
    </ligand>
</feature>
<feature type="binding site" evidence="1">
    <location>
        <position position="132"/>
    </location>
    <ligand>
        <name>L-aspartate</name>
        <dbReference type="ChEBI" id="CHEBI:29991"/>
    </ligand>
</feature>
<feature type="binding site" evidence="1">
    <location>
        <position position="136"/>
    </location>
    <ligand>
        <name>L-aspartate</name>
        <dbReference type="ChEBI" id="CHEBI:29991"/>
    </ligand>
</feature>
<feature type="binding site" evidence="1">
    <location>
        <position position="136"/>
    </location>
    <ligand>
        <name>L-citrulline</name>
        <dbReference type="ChEBI" id="CHEBI:57743"/>
    </ligand>
</feature>
<feature type="binding site" evidence="1">
    <location>
        <position position="137"/>
    </location>
    <ligand>
        <name>ATP</name>
        <dbReference type="ChEBI" id="CHEBI:30616"/>
    </ligand>
</feature>
<feature type="binding site" evidence="1">
    <location>
        <position position="137"/>
    </location>
    <ligand>
        <name>L-aspartate</name>
        <dbReference type="ChEBI" id="CHEBI:29991"/>
    </ligand>
</feature>
<feature type="binding site" evidence="1">
    <location>
        <position position="140"/>
    </location>
    <ligand>
        <name>L-citrulline</name>
        <dbReference type="ChEBI" id="CHEBI:57743"/>
    </ligand>
</feature>
<feature type="binding site" evidence="1">
    <location>
        <position position="193"/>
    </location>
    <ligand>
        <name>L-citrulline</name>
        <dbReference type="ChEBI" id="CHEBI:57743"/>
    </ligand>
</feature>
<feature type="binding site" evidence="1">
    <location>
        <position position="195"/>
    </location>
    <ligand>
        <name>ATP</name>
        <dbReference type="ChEBI" id="CHEBI:30616"/>
    </ligand>
</feature>
<feature type="binding site" evidence="1">
    <location>
        <position position="202"/>
    </location>
    <ligand>
        <name>L-citrulline</name>
        <dbReference type="ChEBI" id="CHEBI:57743"/>
    </ligand>
</feature>
<feature type="binding site" evidence="1">
    <location>
        <position position="204"/>
    </location>
    <ligand>
        <name>L-citrulline</name>
        <dbReference type="ChEBI" id="CHEBI:57743"/>
    </ligand>
</feature>
<feature type="binding site" evidence="1">
    <location>
        <position position="281"/>
    </location>
    <ligand>
        <name>L-citrulline</name>
        <dbReference type="ChEBI" id="CHEBI:57743"/>
    </ligand>
</feature>
<name>ASSY_PASMU</name>
<accession>P57877</accession>
<sequence>MSNTILQQLPKGQKVGIAFSGGLDTSAALLWMRQKGAVPYAYTANLGQPDEEDYNAIPRKAMEYGAENARLIDCRAQLAHEGIAAIQSGAFHISTGGVTYFNTTPLGRAVTGTMLVSAMREDDVNIWGDGSTFKGNDIERFYRYGLLTNPNLKIYKPWLDNQFIEELGGRHEMSEFLIANGFEYKMSVEKAYSTDSNMLGATHEAKDLEFLNTGIRIVKPIMGVAFWRDDVEVKAEEVTVRFEEGIPVALNGKTFSDHVELFLEANRIGGRHGLGMSDQIENRIIEAKSRGIYEAPGMALLHIAYERLVSGIHNEDTIEQYRINGLRLGRLLYQGRWFDPQALMLRETAQRWVARAITGEVTFELRRGNDYSILNTESPNLTYMPERLSMEKVENAPFDPVDRIGQLTMRNLDIVDTRDKLGIYTQTGLLSISKDSFLPQLNKKG</sequence>
<comment type="catalytic activity">
    <reaction>
        <text>L-citrulline + L-aspartate + ATP = 2-(N(omega)-L-arginino)succinate + AMP + diphosphate + H(+)</text>
        <dbReference type="Rhea" id="RHEA:10932"/>
        <dbReference type="ChEBI" id="CHEBI:15378"/>
        <dbReference type="ChEBI" id="CHEBI:29991"/>
        <dbReference type="ChEBI" id="CHEBI:30616"/>
        <dbReference type="ChEBI" id="CHEBI:33019"/>
        <dbReference type="ChEBI" id="CHEBI:57472"/>
        <dbReference type="ChEBI" id="CHEBI:57743"/>
        <dbReference type="ChEBI" id="CHEBI:456215"/>
        <dbReference type="EC" id="6.3.4.5"/>
    </reaction>
</comment>
<comment type="pathway">
    <text>Amino-acid biosynthesis; L-arginine biosynthesis; L-arginine from L-ornithine and carbamoyl phosphate: step 2/3.</text>
</comment>
<comment type="subunit">
    <text evidence="1">Homotetramer.</text>
</comment>
<comment type="subcellular location">
    <subcellularLocation>
        <location evidence="1">Cytoplasm</location>
    </subcellularLocation>
</comment>
<comment type="similarity">
    <text evidence="2">Belongs to the argininosuccinate synthase family. Type 2 subfamily.</text>
</comment>
<evidence type="ECO:0000250" key="1"/>
<evidence type="ECO:0000305" key="2"/>
<protein>
    <recommendedName>
        <fullName>Argininosuccinate synthase</fullName>
        <ecNumber>6.3.4.5</ecNumber>
    </recommendedName>
    <alternativeName>
        <fullName>Citrulline--aspartate ligase</fullName>
    </alternativeName>
</protein>
<keyword id="KW-0028">Amino-acid biosynthesis</keyword>
<keyword id="KW-0055">Arginine biosynthesis</keyword>
<keyword id="KW-0067">ATP-binding</keyword>
<keyword id="KW-0963">Cytoplasm</keyword>
<keyword id="KW-0436">Ligase</keyword>
<keyword id="KW-0547">Nucleotide-binding</keyword>
<keyword id="KW-1185">Reference proteome</keyword>
<gene>
    <name type="primary">argG</name>
    <name type="ordered locus">PM0813</name>
</gene>